<name>DYRK1_DICDI</name>
<accession>Q76NV1</accession>
<accession>Q54ZP4</accession>
<evidence type="ECO:0000255" key="1">
    <source>
        <dbReference type="PROSITE-ProRule" id="PRU00159"/>
    </source>
</evidence>
<evidence type="ECO:0000255" key="2">
    <source>
        <dbReference type="PROSITE-ProRule" id="PRU10027"/>
    </source>
</evidence>
<evidence type="ECO:0000256" key="3">
    <source>
        <dbReference type="SAM" id="MobiDB-lite"/>
    </source>
</evidence>
<evidence type="ECO:0000305" key="4"/>
<gene>
    <name type="primary">dyrk1</name>
    <name type="ORF">DDB_G0277485</name>
</gene>
<sequence>MDSDAKSRNDAPIIKLSIDLIKTYKHINQVYYTAKAKKKQQAQQQAQQQAQQLQQQAQQQQHQLQQQQQLLQQQQQQQQQQQQQQQQQQQQQQQQQQQQQQYQQQHNNNINNNNNNSNINNKNNNNNNTNFNTSNNNNNTNNNSNNNSNNNNSNNNNNNNNINNINNININNKNNNNNNNNNNNINNINNNNNKNNNNNNNNNNNDDNNNINNNNSNNNNNNNNNNNNNNNNNNNNNNNNNSNNNNNNNNLNNNNSNNNYNNNTTTTSSSNNNNNNKQSKYNDGYDDENADYIVRIGEVFVDRFEIISSLGKGSFGQVVKAFDSVLKEYVAIKIIKNKVPFYNQALIEIRLLELMNNKDPEDQYKIIKLKHHFKFRNHLCIVTELLSYNLYDLLRNTHFHGVSLNLIKKFAHQILTALFFMSTPEVDVIHCDLKPENILLRNPKRSAIKIIDFGSSCHSNERMYKYIQSRFYRSPEILLELEYSFSIDMWSLGCILVEMHVGEPLFSGQNEQDQLTKIIEVLDLPPSHMIDSSPKAKKFFTKDPINSTYQLKKNEKLKTNVEFCKKKLSEIIGVETGGPQSRRKNEPGHALVDYLKFLDLIEKMLIYDPQKRITPLEALQHSFFLTDETSQPPQQQSQQQSQQQSQQQSQQQSQQQSQQRRQSNTDNNFSNNNPINNYNSPSSKSPHQQLQQQQQQQQQQQQQQQQQQQQQQQQQQQTYSPTTQQSNHKLVDQMKKASMKDKSPHSNISNILNDSEEDNSKVHINSNTSDNMQARINFQVENQSNIYNNNNNNNNNNNNNNNNNNSNNYNNSNELSPNPPILPNLKDLLPHNNNNI</sequence>
<comment type="catalytic activity">
    <reaction>
        <text>L-seryl-[protein] + ATP = O-phospho-L-seryl-[protein] + ADP + H(+)</text>
        <dbReference type="Rhea" id="RHEA:17989"/>
        <dbReference type="Rhea" id="RHEA-COMP:9863"/>
        <dbReference type="Rhea" id="RHEA-COMP:11604"/>
        <dbReference type="ChEBI" id="CHEBI:15378"/>
        <dbReference type="ChEBI" id="CHEBI:29999"/>
        <dbReference type="ChEBI" id="CHEBI:30616"/>
        <dbReference type="ChEBI" id="CHEBI:83421"/>
        <dbReference type="ChEBI" id="CHEBI:456216"/>
        <dbReference type="EC" id="2.7.12.1"/>
    </reaction>
</comment>
<comment type="catalytic activity">
    <reaction>
        <text>L-threonyl-[protein] + ATP = O-phospho-L-threonyl-[protein] + ADP + H(+)</text>
        <dbReference type="Rhea" id="RHEA:46608"/>
        <dbReference type="Rhea" id="RHEA-COMP:11060"/>
        <dbReference type="Rhea" id="RHEA-COMP:11605"/>
        <dbReference type="ChEBI" id="CHEBI:15378"/>
        <dbReference type="ChEBI" id="CHEBI:30013"/>
        <dbReference type="ChEBI" id="CHEBI:30616"/>
        <dbReference type="ChEBI" id="CHEBI:61977"/>
        <dbReference type="ChEBI" id="CHEBI:456216"/>
        <dbReference type="EC" id="2.7.12.1"/>
    </reaction>
</comment>
<comment type="catalytic activity">
    <reaction>
        <text>L-tyrosyl-[protein] + ATP = O-phospho-L-tyrosyl-[protein] + ADP + H(+)</text>
        <dbReference type="Rhea" id="RHEA:10596"/>
        <dbReference type="Rhea" id="RHEA-COMP:10136"/>
        <dbReference type="Rhea" id="RHEA-COMP:20101"/>
        <dbReference type="ChEBI" id="CHEBI:15378"/>
        <dbReference type="ChEBI" id="CHEBI:30616"/>
        <dbReference type="ChEBI" id="CHEBI:46858"/>
        <dbReference type="ChEBI" id="CHEBI:61978"/>
        <dbReference type="ChEBI" id="CHEBI:456216"/>
        <dbReference type="EC" id="2.7.12.1"/>
    </reaction>
</comment>
<comment type="similarity">
    <text evidence="4">Belongs to the protein kinase superfamily. CMGC Ser/Thr protein kinase family. MNB/DYRK subfamily.</text>
</comment>
<keyword id="KW-0067">ATP-binding</keyword>
<keyword id="KW-0418">Kinase</keyword>
<keyword id="KW-0547">Nucleotide-binding</keyword>
<keyword id="KW-1185">Reference proteome</keyword>
<keyword id="KW-0723">Serine/threonine-protein kinase</keyword>
<keyword id="KW-0808">Transferase</keyword>
<reference key="1">
    <citation type="journal article" date="2002" name="Nature">
        <title>Sequence and analysis of chromosome 2 of Dictyostelium discoideum.</title>
        <authorList>
            <person name="Gloeckner G."/>
            <person name="Eichinger L."/>
            <person name="Szafranski K."/>
            <person name="Pachebat J.A."/>
            <person name="Bankier A.T."/>
            <person name="Dear P.H."/>
            <person name="Lehmann R."/>
            <person name="Baumgart C."/>
            <person name="Parra G."/>
            <person name="Abril J.F."/>
            <person name="Guigo R."/>
            <person name="Kumpf K."/>
            <person name="Tunggal B."/>
            <person name="Cox E.C."/>
            <person name="Quail M.A."/>
            <person name="Platzer M."/>
            <person name="Rosenthal A."/>
            <person name="Noegel A.A."/>
        </authorList>
    </citation>
    <scope>NUCLEOTIDE SEQUENCE [LARGE SCALE GENOMIC DNA]</scope>
    <source>
        <strain>AX4</strain>
    </source>
</reference>
<reference key="2">
    <citation type="journal article" date="2005" name="Nature">
        <title>The genome of the social amoeba Dictyostelium discoideum.</title>
        <authorList>
            <person name="Eichinger L."/>
            <person name="Pachebat J.A."/>
            <person name="Gloeckner G."/>
            <person name="Rajandream M.A."/>
            <person name="Sucgang R."/>
            <person name="Berriman M."/>
            <person name="Song J."/>
            <person name="Olsen R."/>
            <person name="Szafranski K."/>
            <person name="Xu Q."/>
            <person name="Tunggal B."/>
            <person name="Kummerfeld S."/>
            <person name="Madera M."/>
            <person name="Konfortov B.A."/>
            <person name="Rivero F."/>
            <person name="Bankier A.T."/>
            <person name="Lehmann R."/>
            <person name="Hamlin N."/>
            <person name="Davies R."/>
            <person name="Gaudet P."/>
            <person name="Fey P."/>
            <person name="Pilcher K."/>
            <person name="Chen G."/>
            <person name="Saunders D."/>
            <person name="Sodergren E.J."/>
            <person name="Davis P."/>
            <person name="Kerhornou A."/>
            <person name="Nie X."/>
            <person name="Hall N."/>
            <person name="Anjard C."/>
            <person name="Hemphill L."/>
            <person name="Bason N."/>
            <person name="Farbrother P."/>
            <person name="Desany B."/>
            <person name="Just E."/>
            <person name="Morio T."/>
            <person name="Rost R."/>
            <person name="Churcher C.M."/>
            <person name="Cooper J."/>
            <person name="Haydock S."/>
            <person name="van Driessche N."/>
            <person name="Cronin A."/>
            <person name="Goodhead I."/>
            <person name="Muzny D.M."/>
            <person name="Mourier T."/>
            <person name="Pain A."/>
            <person name="Lu M."/>
            <person name="Harper D."/>
            <person name="Lindsay R."/>
            <person name="Hauser H."/>
            <person name="James K.D."/>
            <person name="Quiles M."/>
            <person name="Madan Babu M."/>
            <person name="Saito T."/>
            <person name="Buchrieser C."/>
            <person name="Wardroper A."/>
            <person name="Felder M."/>
            <person name="Thangavelu M."/>
            <person name="Johnson D."/>
            <person name="Knights A."/>
            <person name="Loulseged H."/>
            <person name="Mungall K.L."/>
            <person name="Oliver K."/>
            <person name="Price C."/>
            <person name="Quail M.A."/>
            <person name="Urushihara H."/>
            <person name="Hernandez J."/>
            <person name="Rabbinowitsch E."/>
            <person name="Steffen D."/>
            <person name="Sanders M."/>
            <person name="Ma J."/>
            <person name="Kohara Y."/>
            <person name="Sharp S."/>
            <person name="Simmonds M.N."/>
            <person name="Spiegler S."/>
            <person name="Tivey A."/>
            <person name="Sugano S."/>
            <person name="White B."/>
            <person name="Walker D."/>
            <person name="Woodward J.R."/>
            <person name="Winckler T."/>
            <person name="Tanaka Y."/>
            <person name="Shaulsky G."/>
            <person name="Schleicher M."/>
            <person name="Weinstock G.M."/>
            <person name="Rosenthal A."/>
            <person name="Cox E.C."/>
            <person name="Chisholm R.L."/>
            <person name="Gibbs R.A."/>
            <person name="Loomis W.F."/>
            <person name="Platzer M."/>
            <person name="Kay R.R."/>
            <person name="Williams J.G."/>
            <person name="Dear P.H."/>
            <person name="Noegel A.A."/>
            <person name="Barrell B.G."/>
            <person name="Kuspa A."/>
        </authorList>
    </citation>
    <scope>NUCLEOTIDE SEQUENCE [LARGE SCALE GENOMIC DNA]</scope>
    <source>
        <strain>AX4</strain>
    </source>
</reference>
<protein>
    <recommendedName>
        <fullName>Probable serine/threonine-protein kinase dyrk1</fullName>
        <ecNumber>2.7.12.1</ecNumber>
    </recommendedName>
    <alternativeName>
        <fullName>Dual specificity tyrosine-phosphorylation regulated kinase 1</fullName>
    </alternativeName>
</protein>
<proteinExistence type="inferred from homology"/>
<organism>
    <name type="scientific">Dictyostelium discoideum</name>
    <name type="common">Social amoeba</name>
    <dbReference type="NCBI Taxonomy" id="44689"/>
    <lineage>
        <taxon>Eukaryota</taxon>
        <taxon>Amoebozoa</taxon>
        <taxon>Evosea</taxon>
        <taxon>Eumycetozoa</taxon>
        <taxon>Dictyostelia</taxon>
        <taxon>Dictyosteliales</taxon>
        <taxon>Dictyosteliaceae</taxon>
        <taxon>Dictyostelium</taxon>
    </lineage>
</organism>
<feature type="chain" id="PRO_0000358884" description="Probable serine/threonine-protein kinase dyrk1">
    <location>
        <begin position="1"/>
        <end position="836"/>
    </location>
</feature>
<feature type="domain" description="Protein kinase" evidence="1">
    <location>
        <begin position="304"/>
        <end position="624"/>
    </location>
</feature>
<feature type="region of interest" description="Disordered" evidence="3">
    <location>
        <begin position="99"/>
        <end position="286"/>
    </location>
</feature>
<feature type="region of interest" description="Disordered" evidence="3">
    <location>
        <begin position="627"/>
        <end position="697"/>
    </location>
</feature>
<feature type="region of interest" description="Disordered" evidence="3">
    <location>
        <begin position="718"/>
        <end position="767"/>
    </location>
</feature>
<feature type="region of interest" description="Disordered" evidence="3">
    <location>
        <begin position="785"/>
        <end position="836"/>
    </location>
</feature>
<feature type="compositionally biased region" description="Low complexity" evidence="3">
    <location>
        <begin position="99"/>
        <end position="278"/>
    </location>
</feature>
<feature type="compositionally biased region" description="Low complexity" evidence="3">
    <location>
        <begin position="630"/>
        <end position="697"/>
    </location>
</feature>
<feature type="compositionally biased region" description="Polar residues" evidence="3">
    <location>
        <begin position="718"/>
        <end position="728"/>
    </location>
</feature>
<feature type="compositionally biased region" description="Basic and acidic residues" evidence="3">
    <location>
        <begin position="729"/>
        <end position="744"/>
    </location>
</feature>
<feature type="compositionally biased region" description="Low complexity" evidence="3">
    <location>
        <begin position="785"/>
        <end position="816"/>
    </location>
</feature>
<feature type="active site" description="Proton acceptor" evidence="1 2">
    <location>
        <position position="432"/>
    </location>
</feature>
<feature type="binding site" evidence="1">
    <location>
        <begin position="310"/>
        <end position="318"/>
    </location>
    <ligand>
        <name>ATP</name>
        <dbReference type="ChEBI" id="CHEBI:30616"/>
    </ligand>
</feature>
<feature type="binding site" evidence="1">
    <location>
        <position position="333"/>
    </location>
    <ligand>
        <name>ATP</name>
        <dbReference type="ChEBI" id="CHEBI:30616"/>
    </ligand>
</feature>
<dbReference type="EC" id="2.7.12.1"/>
<dbReference type="EMBL" id="AAFI02000020">
    <property type="protein sequence ID" value="EAL68705.1"/>
    <property type="molecule type" value="Genomic_DNA"/>
</dbReference>
<dbReference type="RefSeq" id="XP_642598.1">
    <property type="nucleotide sequence ID" value="XM_637506.1"/>
</dbReference>
<dbReference type="SMR" id="Q76NV1"/>
<dbReference type="FunCoup" id="Q76NV1">
    <property type="interactions" value="236"/>
</dbReference>
<dbReference type="STRING" id="44689.Q76NV1"/>
<dbReference type="PaxDb" id="44689-DDB0229429"/>
<dbReference type="EnsemblProtists" id="EAL68705">
    <property type="protein sequence ID" value="EAL68705"/>
    <property type="gene ID" value="DDB_G0277485"/>
</dbReference>
<dbReference type="GeneID" id="8621015"/>
<dbReference type="KEGG" id="ddi:DDB_G0277485"/>
<dbReference type="dictyBase" id="DDB_G0277485">
    <property type="gene designation" value="dyrk1"/>
</dbReference>
<dbReference type="VEuPathDB" id="AmoebaDB:DDB_G0277485"/>
<dbReference type="eggNOG" id="KOG0667">
    <property type="taxonomic scope" value="Eukaryota"/>
</dbReference>
<dbReference type="HOGENOM" id="CLU_339937_0_0_1"/>
<dbReference type="InParanoid" id="Q76NV1"/>
<dbReference type="OMA" id="DGIYYCK"/>
<dbReference type="PRO" id="PR:Q76NV1"/>
<dbReference type="Proteomes" id="UP000002195">
    <property type="component" value="Chromosome 2"/>
</dbReference>
<dbReference type="GO" id="GO:0005634">
    <property type="term" value="C:nucleus"/>
    <property type="evidence" value="ECO:0000318"/>
    <property type="project" value="GO_Central"/>
</dbReference>
<dbReference type="GO" id="GO:0005524">
    <property type="term" value="F:ATP binding"/>
    <property type="evidence" value="ECO:0007669"/>
    <property type="project" value="UniProtKB-KW"/>
</dbReference>
<dbReference type="GO" id="GO:0106310">
    <property type="term" value="F:protein serine kinase activity"/>
    <property type="evidence" value="ECO:0007669"/>
    <property type="project" value="RHEA"/>
</dbReference>
<dbReference type="GO" id="GO:0004674">
    <property type="term" value="F:protein serine/threonine kinase activity"/>
    <property type="evidence" value="ECO:0000318"/>
    <property type="project" value="GO_Central"/>
</dbReference>
<dbReference type="GO" id="GO:0004712">
    <property type="term" value="F:protein serine/threonine/tyrosine kinase activity"/>
    <property type="evidence" value="ECO:0007669"/>
    <property type="project" value="UniProtKB-EC"/>
</dbReference>
<dbReference type="GO" id="GO:0004713">
    <property type="term" value="F:protein tyrosine kinase activity"/>
    <property type="evidence" value="ECO:0007669"/>
    <property type="project" value="RHEA"/>
</dbReference>
<dbReference type="GO" id="GO:0003713">
    <property type="term" value="F:transcription coactivator activity"/>
    <property type="evidence" value="ECO:0000318"/>
    <property type="project" value="GO_Central"/>
</dbReference>
<dbReference type="GO" id="GO:0045893">
    <property type="term" value="P:positive regulation of DNA-templated transcription"/>
    <property type="evidence" value="ECO:0000318"/>
    <property type="project" value="GO_Central"/>
</dbReference>
<dbReference type="CDD" id="cd14226">
    <property type="entry name" value="PKc_DYRK1"/>
    <property type="match status" value="1"/>
</dbReference>
<dbReference type="FunFam" id="3.30.200.20:FF:000087">
    <property type="entry name" value="Dual specificity tyrosine-phosphorylation-regulated kinase 1A"/>
    <property type="match status" value="1"/>
</dbReference>
<dbReference type="Gene3D" id="3.30.200.20">
    <property type="entry name" value="Phosphorylase Kinase, domain 1"/>
    <property type="match status" value="1"/>
</dbReference>
<dbReference type="Gene3D" id="1.10.510.10">
    <property type="entry name" value="Transferase(Phosphotransferase) domain 1"/>
    <property type="match status" value="1"/>
</dbReference>
<dbReference type="InterPro" id="IPR011009">
    <property type="entry name" value="Kinase-like_dom_sf"/>
</dbReference>
<dbReference type="InterPro" id="IPR044131">
    <property type="entry name" value="PKc_DYR1A/1B"/>
</dbReference>
<dbReference type="InterPro" id="IPR000719">
    <property type="entry name" value="Prot_kinase_dom"/>
</dbReference>
<dbReference type="InterPro" id="IPR017441">
    <property type="entry name" value="Protein_kinase_ATP_BS"/>
</dbReference>
<dbReference type="InterPro" id="IPR008271">
    <property type="entry name" value="Ser/Thr_kinase_AS"/>
</dbReference>
<dbReference type="InterPro" id="IPR050494">
    <property type="entry name" value="Ser_Thr_dual-spec_kinase"/>
</dbReference>
<dbReference type="PANTHER" id="PTHR24058">
    <property type="entry name" value="DUAL SPECIFICITY PROTEIN KINASE"/>
    <property type="match status" value="1"/>
</dbReference>
<dbReference type="PANTHER" id="PTHR24058:SF28">
    <property type="entry name" value="SERINE_THREONINE-PROTEIN KINASE MINIBRAIN"/>
    <property type="match status" value="1"/>
</dbReference>
<dbReference type="Pfam" id="PF00069">
    <property type="entry name" value="Pkinase"/>
    <property type="match status" value="1"/>
</dbReference>
<dbReference type="SMART" id="SM00220">
    <property type="entry name" value="S_TKc"/>
    <property type="match status" value="1"/>
</dbReference>
<dbReference type="SUPFAM" id="SSF56112">
    <property type="entry name" value="Protein kinase-like (PK-like)"/>
    <property type="match status" value="1"/>
</dbReference>
<dbReference type="PROSITE" id="PS00107">
    <property type="entry name" value="PROTEIN_KINASE_ATP"/>
    <property type="match status" value="1"/>
</dbReference>
<dbReference type="PROSITE" id="PS50011">
    <property type="entry name" value="PROTEIN_KINASE_DOM"/>
    <property type="match status" value="1"/>
</dbReference>
<dbReference type="PROSITE" id="PS00108">
    <property type="entry name" value="PROTEIN_KINASE_ST"/>
    <property type="match status" value="1"/>
</dbReference>